<feature type="chain" id="PRO_0000219952" description="PqqA peptide cyclase">
    <location>
        <begin position="1"/>
        <end position="374"/>
    </location>
</feature>
<feature type="domain" description="Radical SAM core" evidence="2">
    <location>
        <begin position="13"/>
        <end position="230"/>
    </location>
</feature>
<feature type="binding site" evidence="1">
    <location>
        <position position="27"/>
    </location>
    <ligand>
        <name>[4Fe-4S] cluster</name>
        <dbReference type="ChEBI" id="CHEBI:49883"/>
        <note>4Fe-4S-S-AdoMet</note>
    </ligand>
</feature>
<feature type="binding site" evidence="1">
    <location>
        <position position="31"/>
    </location>
    <ligand>
        <name>[4Fe-4S] cluster</name>
        <dbReference type="ChEBI" id="CHEBI:49883"/>
        <note>4Fe-4S-S-AdoMet</note>
    </ligand>
</feature>
<feature type="binding site" evidence="1">
    <location>
        <position position="34"/>
    </location>
    <ligand>
        <name>[4Fe-4S] cluster</name>
        <dbReference type="ChEBI" id="CHEBI:49883"/>
        <note>4Fe-4S-S-AdoMet</note>
    </ligand>
</feature>
<comment type="function">
    <text evidence="1">Catalyzes the cross-linking of a glutamate residue and a tyrosine residue in the PqqA protein as part of the biosynthesis of pyrroloquinoline quinone (PQQ).</text>
</comment>
<comment type="catalytic activity">
    <reaction evidence="1">
        <text>[PQQ precursor protein] + S-adenosyl-L-methionine = E-Y cross-linked-[PQQ precursor protein] + 5'-deoxyadenosine + L-methionine + H(+)</text>
        <dbReference type="Rhea" id="RHEA:56836"/>
        <dbReference type="Rhea" id="RHEA-COMP:14800"/>
        <dbReference type="Rhea" id="RHEA-COMP:14801"/>
        <dbReference type="ChEBI" id="CHEBI:15378"/>
        <dbReference type="ChEBI" id="CHEBI:17319"/>
        <dbReference type="ChEBI" id="CHEBI:57844"/>
        <dbReference type="ChEBI" id="CHEBI:59789"/>
        <dbReference type="ChEBI" id="CHEBI:141026"/>
        <dbReference type="ChEBI" id="CHEBI:141027"/>
        <dbReference type="EC" id="1.21.98.4"/>
    </reaction>
</comment>
<comment type="cofactor">
    <cofactor evidence="1">
        <name>[4Fe-4S] cluster</name>
        <dbReference type="ChEBI" id="CHEBI:49883"/>
    </cofactor>
    <text evidence="1">Binds 1 [4Fe-4S] cluster. The cluster is coordinated with 3 cysteines and an exchangeable S-adenosyl-L-methionine.</text>
</comment>
<comment type="pathway">
    <text evidence="1">Cofactor biosynthesis; pyrroloquinoline quinone biosynthesis.</text>
</comment>
<comment type="subunit">
    <text evidence="1">Interacts with PqqD. The interaction is necessary for activity of PqqE.</text>
</comment>
<comment type="similarity">
    <text evidence="1">Belongs to the radical SAM superfamily. PqqE family.</text>
</comment>
<evidence type="ECO:0000255" key="1">
    <source>
        <dbReference type="HAMAP-Rule" id="MF_00660"/>
    </source>
</evidence>
<evidence type="ECO:0000255" key="2">
    <source>
        <dbReference type="PROSITE-ProRule" id="PRU01266"/>
    </source>
</evidence>
<accession>Q5LTB4</accession>
<proteinExistence type="inferred from homology"/>
<reference key="1">
    <citation type="journal article" date="2004" name="Nature">
        <title>Genome sequence of Silicibacter pomeroyi reveals adaptations to the marine environment.</title>
        <authorList>
            <person name="Moran M.A."/>
            <person name="Buchan A."/>
            <person name="Gonzalez J.M."/>
            <person name="Heidelberg J.F."/>
            <person name="Whitman W.B."/>
            <person name="Kiene R.P."/>
            <person name="Henriksen J.R."/>
            <person name="King G.M."/>
            <person name="Belas R."/>
            <person name="Fuqua C."/>
            <person name="Brinkac L.M."/>
            <person name="Lewis M."/>
            <person name="Johri S."/>
            <person name="Weaver B."/>
            <person name="Pai G."/>
            <person name="Eisen J.A."/>
            <person name="Rahe E."/>
            <person name="Sheldon W.M."/>
            <person name="Ye W."/>
            <person name="Miller T.R."/>
            <person name="Carlton J."/>
            <person name="Rasko D.A."/>
            <person name="Paulsen I.T."/>
            <person name="Ren Q."/>
            <person name="Daugherty S.C."/>
            <person name="DeBoy R.T."/>
            <person name="Dodson R.J."/>
            <person name="Durkin A.S."/>
            <person name="Madupu R."/>
            <person name="Nelson W.C."/>
            <person name="Sullivan S.A."/>
            <person name="Rosovitz M.J."/>
            <person name="Haft D.H."/>
            <person name="Selengut J."/>
            <person name="Ward N."/>
        </authorList>
    </citation>
    <scope>NUCLEOTIDE SEQUENCE [LARGE SCALE GENOMIC DNA]</scope>
    <source>
        <strain>ATCC 700808 / DSM 15171 / DSS-3</strain>
    </source>
</reference>
<reference key="2">
    <citation type="journal article" date="2014" name="Stand. Genomic Sci.">
        <title>An updated genome annotation for the model marine bacterium Ruegeria pomeroyi DSS-3.</title>
        <authorList>
            <person name="Rivers A.R."/>
            <person name="Smith C.B."/>
            <person name="Moran M.A."/>
        </authorList>
    </citation>
    <scope>GENOME REANNOTATION</scope>
    <source>
        <strain>ATCC 700808 / DSM 15171 / DSS-3</strain>
    </source>
</reference>
<keyword id="KW-0004">4Fe-4S</keyword>
<keyword id="KW-0408">Iron</keyword>
<keyword id="KW-0411">Iron-sulfur</keyword>
<keyword id="KW-0479">Metal-binding</keyword>
<keyword id="KW-0560">Oxidoreductase</keyword>
<keyword id="KW-0884">PQQ biosynthesis</keyword>
<keyword id="KW-1185">Reference proteome</keyword>
<keyword id="KW-0949">S-adenosyl-L-methionine</keyword>
<gene>
    <name evidence="1" type="primary">pqqE</name>
    <name type="ordered locus">SPO1500</name>
</gene>
<organism>
    <name type="scientific">Ruegeria pomeroyi (strain ATCC 700808 / DSM 15171 / DSS-3)</name>
    <name type="common">Silicibacter pomeroyi</name>
    <dbReference type="NCBI Taxonomy" id="246200"/>
    <lineage>
        <taxon>Bacteria</taxon>
        <taxon>Pseudomonadati</taxon>
        <taxon>Pseudomonadota</taxon>
        <taxon>Alphaproteobacteria</taxon>
        <taxon>Rhodobacterales</taxon>
        <taxon>Roseobacteraceae</taxon>
        <taxon>Ruegeria</taxon>
    </lineage>
</organism>
<dbReference type="EC" id="1.21.98.4" evidence="1"/>
<dbReference type="EMBL" id="CP000031">
    <property type="protein sequence ID" value="AAV94787.1"/>
    <property type="molecule type" value="Genomic_DNA"/>
</dbReference>
<dbReference type="SMR" id="Q5LTB4"/>
<dbReference type="STRING" id="246200.SPO1500"/>
<dbReference type="PaxDb" id="246200-SPO1500"/>
<dbReference type="KEGG" id="sil:SPO1500"/>
<dbReference type="eggNOG" id="COG0535">
    <property type="taxonomic scope" value="Bacteria"/>
</dbReference>
<dbReference type="HOGENOM" id="CLU_009273_4_7_5"/>
<dbReference type="OrthoDB" id="9792276at2"/>
<dbReference type="UniPathway" id="UPA00539"/>
<dbReference type="Proteomes" id="UP000001023">
    <property type="component" value="Chromosome"/>
</dbReference>
<dbReference type="GO" id="GO:0051539">
    <property type="term" value="F:4 iron, 4 sulfur cluster binding"/>
    <property type="evidence" value="ECO:0007669"/>
    <property type="project" value="UniProtKB-KW"/>
</dbReference>
<dbReference type="GO" id="GO:0009975">
    <property type="term" value="F:cyclase activity"/>
    <property type="evidence" value="ECO:0007669"/>
    <property type="project" value="UniProtKB-UniRule"/>
</dbReference>
<dbReference type="GO" id="GO:0005506">
    <property type="term" value="F:iron ion binding"/>
    <property type="evidence" value="ECO:0007669"/>
    <property type="project" value="UniProtKB-UniRule"/>
</dbReference>
<dbReference type="GO" id="GO:0016491">
    <property type="term" value="F:oxidoreductase activity"/>
    <property type="evidence" value="ECO:0007669"/>
    <property type="project" value="UniProtKB-KW"/>
</dbReference>
<dbReference type="GO" id="GO:1904047">
    <property type="term" value="F:S-adenosyl-L-methionine binding"/>
    <property type="evidence" value="ECO:0007669"/>
    <property type="project" value="UniProtKB-UniRule"/>
</dbReference>
<dbReference type="GO" id="GO:0018189">
    <property type="term" value="P:pyrroloquinoline quinone biosynthetic process"/>
    <property type="evidence" value="ECO:0007669"/>
    <property type="project" value="UniProtKB-UniRule"/>
</dbReference>
<dbReference type="CDD" id="cd01335">
    <property type="entry name" value="Radical_SAM"/>
    <property type="match status" value="1"/>
</dbReference>
<dbReference type="CDD" id="cd21119">
    <property type="entry name" value="SPASM_PqqE"/>
    <property type="match status" value="1"/>
</dbReference>
<dbReference type="Gene3D" id="3.20.20.70">
    <property type="entry name" value="Aldolase class I"/>
    <property type="match status" value="1"/>
</dbReference>
<dbReference type="HAMAP" id="MF_00660">
    <property type="entry name" value="PqqE"/>
    <property type="match status" value="1"/>
</dbReference>
<dbReference type="InterPro" id="IPR023885">
    <property type="entry name" value="4Fe4S-binding_SPASM_dom"/>
</dbReference>
<dbReference type="InterPro" id="IPR013785">
    <property type="entry name" value="Aldolase_TIM"/>
</dbReference>
<dbReference type="InterPro" id="IPR006638">
    <property type="entry name" value="Elp3/MiaA/NifB-like_rSAM"/>
</dbReference>
<dbReference type="InterPro" id="IPR011843">
    <property type="entry name" value="PQQ_synth_PqqE_bac"/>
</dbReference>
<dbReference type="InterPro" id="IPR017200">
    <property type="entry name" value="PqqE-like"/>
</dbReference>
<dbReference type="InterPro" id="IPR050377">
    <property type="entry name" value="Radical_SAM_PqqE_MftC-like"/>
</dbReference>
<dbReference type="InterPro" id="IPR007197">
    <property type="entry name" value="rSAM"/>
</dbReference>
<dbReference type="NCBIfam" id="TIGR02109">
    <property type="entry name" value="PQQ_syn_pqqE"/>
    <property type="match status" value="1"/>
</dbReference>
<dbReference type="NCBIfam" id="TIGR04085">
    <property type="entry name" value="rSAM_more_4Fe4S"/>
    <property type="match status" value="1"/>
</dbReference>
<dbReference type="PANTHER" id="PTHR11228:SF7">
    <property type="entry name" value="PQQA PEPTIDE CYCLASE"/>
    <property type="match status" value="1"/>
</dbReference>
<dbReference type="PANTHER" id="PTHR11228">
    <property type="entry name" value="RADICAL SAM DOMAIN PROTEIN"/>
    <property type="match status" value="1"/>
</dbReference>
<dbReference type="Pfam" id="PF04055">
    <property type="entry name" value="Radical_SAM"/>
    <property type="match status" value="1"/>
</dbReference>
<dbReference type="Pfam" id="PF13186">
    <property type="entry name" value="SPASM"/>
    <property type="match status" value="1"/>
</dbReference>
<dbReference type="PIRSF" id="PIRSF037420">
    <property type="entry name" value="PQQ_syn_pqqE"/>
    <property type="match status" value="1"/>
</dbReference>
<dbReference type="SFLD" id="SFLDF00280">
    <property type="entry name" value="coenzyme_PQQ_synthesis_protein"/>
    <property type="match status" value="1"/>
</dbReference>
<dbReference type="SFLD" id="SFLDG01067">
    <property type="entry name" value="SPASM/twitch_domain_containing"/>
    <property type="match status" value="1"/>
</dbReference>
<dbReference type="SMART" id="SM00729">
    <property type="entry name" value="Elp3"/>
    <property type="match status" value="1"/>
</dbReference>
<dbReference type="SUPFAM" id="SSF102114">
    <property type="entry name" value="Radical SAM enzymes"/>
    <property type="match status" value="1"/>
</dbReference>
<dbReference type="PROSITE" id="PS51918">
    <property type="entry name" value="RADICAL_SAM"/>
    <property type="match status" value="1"/>
</dbReference>
<protein>
    <recommendedName>
        <fullName evidence="1">PqqA peptide cyclase</fullName>
        <ecNumber evidence="1">1.21.98.4</ecNumber>
    </recommendedName>
    <alternativeName>
        <fullName evidence="1">Coenzyme PQQ synthesis protein E</fullName>
    </alternativeName>
    <alternativeName>
        <fullName evidence="1">Pyrroloquinoline quinone biosynthesis protein E</fullName>
    </alternativeName>
</protein>
<sequence>MPNSGGEAPEMTVPAPIAMLAELTHRCPLACPYCSNPLALHGKARELDTQTWARAFDEAAALGVLQLHLSGGEPASRPDLVELTRAAHEAGLYTNLITSGIGLTPARLDALEAVGLDHIQLSLQGTTPDLADRIGGYKGGFARKMAVAAEIKARGIPLTLNAVMHRHNLDDLERTIELAIELGARRLEVACVQFHGWATRNRAALLPSRAQTEAAKRIVAEAEARLRGTLAFDFVPPDYYADYPKACMGGWGSAGLNIAPDGTVLPCHAAETIPHLSFDRFPDKTLREIWYEGAAFNAYRGTDHLPETCRSCDRVNIDFGGCRCQALALAGDPAATDPVCSRSPDHHKVTALLEAALAGGDGAEFTYRRMPRKG</sequence>
<name>PQQE_RUEPO</name>